<keyword id="KW-0002">3D-structure</keyword>
<keyword id="KW-1015">Disulfide bond</keyword>
<keyword id="KW-0389">IgE-binding protein</keyword>
<keyword id="KW-0472">Membrane</keyword>
<keyword id="KW-0597">Phosphoprotein</keyword>
<keyword id="KW-1267">Proteomics identification</keyword>
<keyword id="KW-0675">Receptor</keyword>
<keyword id="KW-1185">Reference proteome</keyword>
<keyword id="KW-0812">Transmembrane</keyword>
<keyword id="KW-1133">Transmembrane helix</keyword>
<name>FCERB_HUMAN</name>
<protein>
    <recommendedName>
        <fullName>High affinity immunoglobulin epsilon receptor subunit beta</fullName>
        <shortName>FcERI</shortName>
    </recommendedName>
    <alternativeName>
        <fullName>Fc epsilon receptor I beta-chain</fullName>
    </alternativeName>
    <alternativeName>
        <fullName>IgE Fc receptor subunit beta</fullName>
    </alternativeName>
    <alternativeName>
        <fullName>Membrane-spanning 4-domains subfamily A member 2</fullName>
    </alternativeName>
</protein>
<feature type="chain" id="PRO_0000158629" description="High affinity immunoglobulin epsilon receptor subunit beta">
    <location>
        <begin position="1"/>
        <end position="244"/>
    </location>
</feature>
<feature type="topological domain" description="Cytoplasmic" evidence="3">
    <location>
        <begin position="1"/>
        <end position="59"/>
    </location>
</feature>
<feature type="transmembrane region" description="Helical" evidence="3">
    <location>
        <begin position="60"/>
        <end position="79"/>
    </location>
</feature>
<feature type="topological domain" description="Extracellular" evidence="3">
    <location>
        <begin position="80"/>
        <end position="97"/>
    </location>
</feature>
<feature type="transmembrane region" description="Helical" evidence="3">
    <location>
        <begin position="98"/>
        <end position="117"/>
    </location>
</feature>
<feature type="topological domain" description="Cytoplasmic" evidence="3">
    <location>
        <begin position="118"/>
        <end position="130"/>
    </location>
</feature>
<feature type="transmembrane region" description="Helical" evidence="3">
    <location>
        <begin position="131"/>
        <end position="150"/>
    </location>
</feature>
<feature type="topological domain" description="Extracellular" evidence="3">
    <location>
        <begin position="151"/>
        <end position="180"/>
    </location>
</feature>
<feature type="transmembrane region" description="Helical" evidence="3">
    <location>
        <begin position="181"/>
        <end position="200"/>
    </location>
</feature>
<feature type="topological domain" description="Cytoplasmic" evidence="3">
    <location>
        <begin position="201"/>
        <end position="244"/>
    </location>
</feature>
<feature type="modified residue" description="Phosphotyrosine" evidence="2">
    <location>
        <position position="219"/>
    </location>
</feature>
<feature type="modified residue" description="Phosphotyrosine" evidence="2">
    <location>
        <position position="225"/>
    </location>
</feature>
<feature type="modified residue" description="Phosphoserine" evidence="2">
    <location>
        <position position="226"/>
    </location>
</feature>
<feature type="modified residue" description="Phosphotyrosine" evidence="2">
    <location>
        <position position="229"/>
    </location>
</feature>
<feature type="sequence variant" id="VAR_053515" description="In dbSNP:rs35033981.">
    <original>T</original>
    <variation>M</variation>
    <location>
        <position position="143"/>
    </location>
</feature>
<feature type="sequence variant" id="VAR_053516" description="In dbSNP:rs535630.">
    <original>N</original>
    <variation>K</variation>
    <location>
        <position position="211"/>
    </location>
</feature>
<feature type="sequence variant" id="VAR_003965" description="Risk factor for atopic dermatitis and asthma; dbSNP:rs569108." evidence="4 5">
    <original>E</original>
    <variation>G</variation>
    <location>
        <position position="237"/>
    </location>
</feature>
<feature type="turn" evidence="7">
    <location>
        <begin position="52"/>
        <end position="56"/>
    </location>
</feature>
<feature type="helix" evidence="7">
    <location>
        <begin position="59"/>
        <end position="80"/>
    </location>
</feature>
<feature type="helix" evidence="7">
    <location>
        <begin position="85"/>
        <end position="87"/>
    </location>
</feature>
<feature type="turn" evidence="7">
    <location>
        <begin position="94"/>
        <end position="100"/>
    </location>
</feature>
<feature type="helix" evidence="7">
    <location>
        <begin position="101"/>
        <end position="120"/>
    </location>
</feature>
<feature type="helix" evidence="7">
    <location>
        <begin position="124"/>
        <end position="162"/>
    </location>
</feature>
<feature type="turn" evidence="7">
    <location>
        <begin position="163"/>
        <end position="166"/>
    </location>
</feature>
<feature type="helix" evidence="7">
    <location>
        <begin position="170"/>
        <end position="206"/>
    </location>
</feature>
<gene>
    <name type="primary">MS4A2</name>
    <name type="synonym">APY</name>
    <name type="synonym">FCER1B</name>
    <name type="synonym">IGER</name>
</gene>
<comment type="function">
    <text>High affinity receptor that binds to the Fc region of immunoglobulins epsilon. Aggregation of FCER1 by multivalent antigens is required for the full mast cell response, including the release of preformed mediators (such as histamine) by degranulation and de novo production of lipid mediators and cytokines. Also mediates the secretion of important lymphokines. Binding of allergen to receptor-bound IgE leads to cell activation and the release of mediators responsible for the manifestations of allergy.</text>
</comment>
<comment type="subunit">
    <text evidence="1">Tetramer of an alpha chain, a beta chain, and two disulfide linked gamma chains. Binds LILRB1. Interacts with FGR, FES/FPS and LYN (By similarity).</text>
</comment>
<comment type="interaction">
    <interactant intactId="EBI-13384102">
        <id>Q01362</id>
    </interactant>
    <interactant intactId="EBI-12015604">
        <id>Q8N2M4</id>
        <label>TMEM86A</label>
    </interactant>
    <organismsDiffer>false</organismsDiffer>
    <experiments>5</experiments>
</comment>
<comment type="subcellular location">
    <subcellularLocation>
        <location>Membrane</location>
        <topology>Multi-pass membrane protein</topology>
    </subcellularLocation>
</comment>
<comment type="tissue specificity">
    <text>Found on the surface of mast cells and basophils.</text>
</comment>
<comment type="PTM">
    <text evidence="1">Phosphorylated on tyrosine residues by LYN.</text>
</comment>
<comment type="polymorphism">
    <text evidence="4">Variant Glu-237 has been found to be present in about 5.3% of a 1004 individuals population sample in Australia (PubMed:8817330).</text>
</comment>
<comment type="similarity">
    <text evidence="6">Belongs to the MS4A family.</text>
</comment>
<accession>Q01362</accession>
<accession>Q54A81</accession>
<sequence>MDTESNRRANLALPQEPSSVPAFEVLEISPQEVSSGRLLKSASSPPLHTWLTVLKKEQEFLGVTQILTAMICLCFGTVVCSVLDISHIEGDIFSSFKAGYPFWGAIFFSISGMLSIISERRNATYLVRGSLGANTASSIAGGTGITILIINLKKSLAYIHIHSCQKFFETKCFMASFSTEIVVMMLFLTILGLGSAVSLTICGAGEELKGNKVPEDRVYEELNIYSATYSELEDPGEMSPPIDL</sequence>
<reference key="1">
    <citation type="journal article" date="1992" name="J. Biol. Chem.">
        <title>The gene and cDNA for the human high affinity immunoglobulin E receptor beta chain and expression of the complete human receptor.</title>
        <authorList>
            <person name="Kuester H."/>
            <person name="Zhang L."/>
            <person name="Brini A.T."/>
            <person name="Macglashan D.W."/>
            <person name="Kinet J.-P."/>
        </authorList>
    </citation>
    <scope>NUCLEOTIDE SEQUENCE [GENOMIC DNA]</scope>
</reference>
<reference key="2">
    <citation type="journal article" date="1992" name="FEBS Lett.">
        <title>Determination of the sequence coding for the beta subunit of the human high-affinity IgE receptor.</title>
        <authorList>
            <person name="Maekawa K."/>
            <person name="Imagawa N."/>
            <person name="Tanaka Y."/>
            <person name="Harada S."/>
        </authorList>
    </citation>
    <scope>NUCLEOTIDE SEQUENCE [MRNA]</scope>
</reference>
<reference key="3">
    <citation type="journal article" date="2003" name="Int. Immunol.">
        <title>Regulation of human FcepsilonRI beta chain gene expression by Oct-1.</title>
        <authorList>
            <person name="Akizawa Y."/>
            <person name="Nishiyama C."/>
            <person name="Hasegawa M."/>
            <person name="Maeda K."/>
            <person name="Nakahata T."/>
            <person name="Okumura K."/>
            <person name="Ra C."/>
            <person name="Ogawa H."/>
        </authorList>
    </citation>
    <scope>NUCLEOTIDE SEQUENCE [GENOMIC DNA]</scope>
</reference>
<reference key="4">
    <citation type="journal article" date="2004" name="Genome Res.">
        <title>The status, quality, and expansion of the NIH full-length cDNA project: the Mammalian Gene Collection (MGC).</title>
        <authorList>
            <consortium name="The MGC Project Team"/>
        </authorList>
    </citation>
    <scope>NUCLEOTIDE SEQUENCE [LARGE SCALE MRNA]</scope>
    <source>
        <tissue>Lung</tissue>
    </source>
</reference>
<reference key="5">
    <citation type="journal article" date="1996" name="Hum. Mol. Genet.">
        <title>A new variant of the beta subunit of the high-affinity receptor for immunoglobulin E (Fc epsilon RI-beta E237G): associations with measures of atopy and bronchial hyper-responsiveness.</title>
        <authorList>
            <person name="Hill M.R."/>
            <person name="Cookson W.O."/>
        </authorList>
    </citation>
    <scope>VARIANT GLY-237</scope>
    <scope>INVOLVEMENT IN ATOPIC ASTHMA SUSCEPTIBILITY</scope>
</reference>
<reference key="6">
    <citation type="journal article" date="1996" name="Hum. Mol. Genet.">
        <title>Association between atopic asthma and a coding variant of Fc-epsilon-RI-beta in a Japanese population.</title>
        <authorList>
            <person name="Shirakawa T."/>
            <person name="Mao X.-Q."/>
            <person name="Sasaki S."/>
            <person name="Enomoto T."/>
            <person name="Kawai M."/>
            <person name="Morimoto K."/>
            <person name="Hopkin J."/>
        </authorList>
    </citation>
    <scope>VARIANT GLY-237</scope>
    <scope>INVOLVEMENT IN ATOPIC ASTHMA SUSCEPTIBILITY</scope>
</reference>
<reference key="7">
    <citation type="journal article" date="1996" name="Hum. Mol. Genet.">
        <authorList>
            <person name="Shirakawa T."/>
            <person name="Mao X.-Q."/>
            <person name="Sasaki S."/>
            <person name="Enomoto T."/>
            <person name="Kawai M."/>
            <person name="Morimoto K."/>
            <person name="Hopkin J."/>
        </authorList>
    </citation>
    <scope>ERRATUM OF PUBMED:8842731</scope>
</reference>
<dbReference type="EMBL" id="D10583">
    <property type="protein sequence ID" value="BAA01440.1"/>
    <property type="molecule type" value="mRNA"/>
</dbReference>
<dbReference type="EMBL" id="M89796">
    <property type="protein sequence ID" value="AAA60269.1"/>
    <property type="molecule type" value="Genomic_DNA"/>
</dbReference>
<dbReference type="EMBL" id="AB080913">
    <property type="protein sequence ID" value="BAC66486.1"/>
    <property type="molecule type" value="Genomic_DNA"/>
</dbReference>
<dbReference type="EMBL" id="BC074800">
    <property type="protein sequence ID" value="AAH74800.1"/>
    <property type="molecule type" value="mRNA"/>
</dbReference>
<dbReference type="EMBL" id="BC074843">
    <property type="protein sequence ID" value="AAH74843.1"/>
    <property type="molecule type" value="mRNA"/>
</dbReference>
<dbReference type="CCDS" id="CCDS7980.1"/>
<dbReference type="PIR" id="A42806">
    <property type="entry name" value="A42806"/>
</dbReference>
<dbReference type="RefSeq" id="NP_000130.1">
    <property type="nucleotide sequence ID" value="NM_000139.5"/>
</dbReference>
<dbReference type="RefSeq" id="XP_011543152.1">
    <property type="nucleotide sequence ID" value="XM_011544850.3"/>
</dbReference>
<dbReference type="RefSeq" id="XP_054224012.1">
    <property type="nucleotide sequence ID" value="XM_054368037.1"/>
</dbReference>
<dbReference type="PDB" id="8YVU">
    <property type="method" value="EM"/>
    <property type="resolution" value="3.90 A"/>
    <property type="chains" value="B/F=49-208"/>
</dbReference>
<dbReference type="PDB" id="8YWA">
    <property type="method" value="EM"/>
    <property type="resolution" value="3.14 A"/>
    <property type="chains" value="B=1-244"/>
</dbReference>
<dbReference type="PDBsum" id="8YVU"/>
<dbReference type="PDBsum" id="8YWA"/>
<dbReference type="EMDB" id="EMD-39614"/>
<dbReference type="EMDB" id="EMD-39627"/>
<dbReference type="SMR" id="Q01362"/>
<dbReference type="BioGRID" id="108500">
    <property type="interactions" value="6"/>
</dbReference>
<dbReference type="CORUM" id="Q01362"/>
<dbReference type="FunCoup" id="Q01362">
    <property type="interactions" value="303"/>
</dbReference>
<dbReference type="IntAct" id="Q01362">
    <property type="interactions" value="1"/>
</dbReference>
<dbReference type="STRING" id="9606.ENSP00000278888"/>
<dbReference type="TCDB" id="1.A.37.3.2">
    <property type="family name" value="the cd20 ca(2+) channel (cd20) family"/>
</dbReference>
<dbReference type="iPTMnet" id="Q01362"/>
<dbReference type="PhosphoSitePlus" id="Q01362"/>
<dbReference type="BioMuta" id="MS4A2"/>
<dbReference type="DMDM" id="232084"/>
<dbReference type="jPOST" id="Q01362"/>
<dbReference type="MassIVE" id="Q01362"/>
<dbReference type="PaxDb" id="9606-ENSP00000278888"/>
<dbReference type="PeptideAtlas" id="Q01362"/>
<dbReference type="ABCD" id="Q01362">
    <property type="antibodies" value="1 sequenced antibody"/>
</dbReference>
<dbReference type="Antibodypedia" id="27859">
    <property type="antibodies" value="71 antibodies from 16 providers"/>
</dbReference>
<dbReference type="DNASU" id="2206"/>
<dbReference type="Ensembl" id="ENST00000278888.8">
    <property type="protein sequence ID" value="ENSP00000278888.3"/>
    <property type="gene ID" value="ENSG00000149534.9"/>
</dbReference>
<dbReference type="GeneID" id="2206"/>
<dbReference type="KEGG" id="hsa:2206"/>
<dbReference type="MANE-Select" id="ENST00000278888.8">
    <property type="protein sequence ID" value="ENSP00000278888.3"/>
    <property type="RefSeq nucleotide sequence ID" value="NM_000139.5"/>
    <property type="RefSeq protein sequence ID" value="NP_000130.1"/>
</dbReference>
<dbReference type="UCSC" id="uc001nop.4">
    <property type="organism name" value="human"/>
</dbReference>
<dbReference type="AGR" id="HGNC:7316"/>
<dbReference type="CTD" id="2206"/>
<dbReference type="DisGeNET" id="2206"/>
<dbReference type="GeneCards" id="MS4A2"/>
<dbReference type="HGNC" id="HGNC:7316">
    <property type="gene designation" value="MS4A2"/>
</dbReference>
<dbReference type="HPA" id="ENSG00000149534">
    <property type="expression patterns" value="Tissue enhanced (lung)"/>
</dbReference>
<dbReference type="MalaCards" id="MS4A2"/>
<dbReference type="MIM" id="147138">
    <property type="type" value="gene"/>
</dbReference>
<dbReference type="neXtProt" id="NX_Q01362"/>
<dbReference type="OpenTargets" id="ENSG00000149534"/>
<dbReference type="PharmGKB" id="PA31109"/>
<dbReference type="VEuPathDB" id="HostDB:ENSG00000149534"/>
<dbReference type="eggNOG" id="ENOG502TM6F">
    <property type="taxonomic scope" value="Eukaryota"/>
</dbReference>
<dbReference type="GeneTree" id="ENSGT00940000161985"/>
<dbReference type="HOGENOM" id="CLU_093202_0_0_1"/>
<dbReference type="InParanoid" id="Q01362"/>
<dbReference type="OMA" id="AYIYNCQ"/>
<dbReference type="OrthoDB" id="10071849at2759"/>
<dbReference type="PAN-GO" id="Q01362">
    <property type="GO annotations" value="4 GO annotations based on evolutionary models"/>
</dbReference>
<dbReference type="PhylomeDB" id="Q01362"/>
<dbReference type="TreeFam" id="TF335157"/>
<dbReference type="PathwayCommons" id="Q01362"/>
<dbReference type="Reactome" id="R-HSA-2454202">
    <property type="pathway name" value="Fc epsilon receptor (FCERI) signaling"/>
</dbReference>
<dbReference type="Reactome" id="R-HSA-2730905">
    <property type="pathway name" value="Role of LAT2/NTAL/LAB on calcium mobilization"/>
</dbReference>
<dbReference type="Reactome" id="R-HSA-2871796">
    <property type="pathway name" value="FCERI mediated MAPK activation"/>
</dbReference>
<dbReference type="Reactome" id="R-HSA-2871809">
    <property type="pathway name" value="FCERI mediated Ca+2 mobilization"/>
</dbReference>
<dbReference type="Reactome" id="R-HSA-2871837">
    <property type="pathway name" value="FCERI mediated NF-kB activation"/>
</dbReference>
<dbReference type="SignaLink" id="Q01362"/>
<dbReference type="SIGNOR" id="Q01362"/>
<dbReference type="BioGRID-ORCS" id="2206">
    <property type="hits" value="14 hits in 1157 CRISPR screens"/>
</dbReference>
<dbReference type="GeneWiki" id="MS4A2"/>
<dbReference type="GenomeRNAi" id="2206"/>
<dbReference type="Pharos" id="Q01362">
    <property type="development level" value="Tbio"/>
</dbReference>
<dbReference type="PRO" id="PR:Q01362"/>
<dbReference type="Proteomes" id="UP000005640">
    <property type="component" value="Chromosome 11"/>
</dbReference>
<dbReference type="RNAct" id="Q01362">
    <property type="molecule type" value="protein"/>
</dbReference>
<dbReference type="Bgee" id="ENSG00000149534">
    <property type="expression patterns" value="Expressed in primordial germ cell in gonad and 90 other cell types or tissues"/>
</dbReference>
<dbReference type="ExpressionAtlas" id="Q01362">
    <property type="expression patterns" value="baseline and differential"/>
</dbReference>
<dbReference type="GO" id="GO:0009897">
    <property type="term" value="C:external side of plasma membrane"/>
    <property type="evidence" value="ECO:0000318"/>
    <property type="project" value="GO_Central"/>
</dbReference>
<dbReference type="GO" id="GO:0032998">
    <property type="term" value="C:Fc-epsilon receptor I complex"/>
    <property type="evidence" value="ECO:0000318"/>
    <property type="project" value="GO_Central"/>
</dbReference>
<dbReference type="GO" id="GO:0005886">
    <property type="term" value="C:plasma membrane"/>
    <property type="evidence" value="ECO:0000318"/>
    <property type="project" value="GO_Central"/>
</dbReference>
<dbReference type="GO" id="GO:0019863">
    <property type="term" value="F:IgE binding"/>
    <property type="evidence" value="ECO:0007669"/>
    <property type="project" value="UniProtKB-KW"/>
</dbReference>
<dbReference type="GO" id="GO:0007166">
    <property type="term" value="P:cell surface receptor signaling pathway"/>
    <property type="evidence" value="ECO:0000318"/>
    <property type="project" value="GO_Central"/>
</dbReference>
<dbReference type="GO" id="GO:0006955">
    <property type="term" value="P:immune response"/>
    <property type="evidence" value="ECO:0000315"/>
    <property type="project" value="UniProtKB"/>
</dbReference>
<dbReference type="InterPro" id="IPR007237">
    <property type="entry name" value="CD20-like"/>
</dbReference>
<dbReference type="InterPro" id="IPR030417">
    <property type="entry name" value="MS4A"/>
</dbReference>
<dbReference type="PANTHER" id="PTHR23320:SF66">
    <property type="entry name" value="HIGH AFFINITY IMMUNOGLOBULIN EPSILON RECEPTOR SUBUNIT BETA"/>
    <property type="match status" value="1"/>
</dbReference>
<dbReference type="PANTHER" id="PTHR23320">
    <property type="entry name" value="MEMBRANE-SPANNING 4-DOMAINS SUBFAMILY A MS4A -RELATED"/>
    <property type="match status" value="1"/>
</dbReference>
<dbReference type="Pfam" id="PF04103">
    <property type="entry name" value="CD20"/>
    <property type="match status" value="1"/>
</dbReference>
<organism>
    <name type="scientific">Homo sapiens</name>
    <name type="common">Human</name>
    <dbReference type="NCBI Taxonomy" id="9606"/>
    <lineage>
        <taxon>Eukaryota</taxon>
        <taxon>Metazoa</taxon>
        <taxon>Chordata</taxon>
        <taxon>Craniata</taxon>
        <taxon>Vertebrata</taxon>
        <taxon>Euteleostomi</taxon>
        <taxon>Mammalia</taxon>
        <taxon>Eutheria</taxon>
        <taxon>Euarchontoglires</taxon>
        <taxon>Primates</taxon>
        <taxon>Haplorrhini</taxon>
        <taxon>Catarrhini</taxon>
        <taxon>Hominidae</taxon>
        <taxon>Homo</taxon>
    </lineage>
</organism>
<proteinExistence type="evidence at protein level"/>
<evidence type="ECO:0000250" key="1"/>
<evidence type="ECO:0000250" key="2">
    <source>
        <dbReference type="UniProtKB" id="P20490"/>
    </source>
</evidence>
<evidence type="ECO:0000255" key="3"/>
<evidence type="ECO:0000269" key="4">
    <source>
    </source>
</evidence>
<evidence type="ECO:0000269" key="5">
    <source>
    </source>
</evidence>
<evidence type="ECO:0000305" key="6"/>
<evidence type="ECO:0007829" key="7">
    <source>
        <dbReference type="PDB" id="8YWA"/>
    </source>
</evidence>